<proteinExistence type="evidence at protein level"/>
<evidence type="ECO:0000250" key="1">
    <source>
        <dbReference type="UniProtKB" id="Q5I7T1"/>
    </source>
</evidence>
<evidence type="ECO:0000255" key="2"/>
<evidence type="ECO:0000305" key="3"/>
<evidence type="ECO:0000312" key="4">
    <source>
        <dbReference type="HGNC" id="HGNC:23162"/>
    </source>
</evidence>
<organism>
    <name type="scientific">Homo sapiens</name>
    <name type="common">Human</name>
    <dbReference type="NCBI Taxonomy" id="9606"/>
    <lineage>
        <taxon>Eukaryota</taxon>
        <taxon>Metazoa</taxon>
        <taxon>Chordata</taxon>
        <taxon>Craniata</taxon>
        <taxon>Vertebrata</taxon>
        <taxon>Euteleostomi</taxon>
        <taxon>Mammalia</taxon>
        <taxon>Eutheria</taxon>
        <taxon>Euarchontoglires</taxon>
        <taxon>Primates</taxon>
        <taxon>Haplorrhini</taxon>
        <taxon>Catarrhini</taxon>
        <taxon>Hominidae</taxon>
        <taxon>Homo</taxon>
    </lineage>
</organism>
<sequence length="473" mass="55606">MAQLEGYYFSAALSCTFLVSCLLFSAFSRALREPYMDEIFHLPQAQRYCEGHFSLSQWDPMITTLPGLYLVSIGVIKPAIWIFGWSEHVVCSIGMLRFVNLLFSVGNFYLLYLLFCKVQPRNKAASSIQRVLSTLTLAVFPTLYFFNFLYYTEAGSMFFTLFAYLMCLYGNHKTSAFLGFCGFMFRQTNIIWAVFCAGNVIAQKLTEAWKTELQKKEDRLPPIKGPFAEFRKILQFLLAYSMSFKNLSMLLLLTWPYILLGFLFCAFVVVNGGIVIGDRSSHEACLHFPQLFYFFSFTLFFSFPHLLSPSKIKTFLSLVWKRRILFFVVTLVSVFLVWKFTYAHKYLLADNRHYTFYVWKRVFQRYETVKYLLVPAYIFAGWSIADSLKSKSIFWNLMFFICLFTVIVPQKLLEFRYFILPYVIYRLNIPLPPTSRLICELSCYAVVNFITFFIFLNKTFQWPNSQDIQRFMW</sequence>
<reference key="1">
    <citation type="journal article" date="2002" name="Mol. Biol. Evol.">
        <title>Common origin and evolution of glycosyltransferases using Dol-P-monosaccharides as donor substrate.</title>
        <authorList>
            <person name="Oriol R."/>
            <person name="Martinez-Duncker I."/>
            <person name="Chantret I."/>
            <person name="Mollicone R."/>
            <person name="Codogno P."/>
        </authorList>
    </citation>
    <scope>NUCLEOTIDE SEQUENCE [MRNA]</scope>
    <source>
        <tissue>Embryo</tissue>
    </source>
</reference>
<reference key="2">
    <citation type="journal article" date="2004" name="Genome Res.">
        <title>The status, quality, and expansion of the NIH full-length cDNA project: the Mammalian Gene Collection (MGC).</title>
        <authorList>
            <consortium name="The MGC Project Team"/>
        </authorList>
    </citation>
    <scope>NUCLEOTIDE SEQUENCE [LARGE SCALE MRNA]</scope>
    <source>
        <tissue>Brain</tissue>
        <tissue>Lung</tissue>
    </source>
</reference>
<reference key="3">
    <citation type="journal article" date="2004" name="Nat. Genet.">
        <title>Complete sequencing and characterization of 21,243 full-length human cDNAs.</title>
        <authorList>
            <person name="Ota T."/>
            <person name="Suzuki Y."/>
            <person name="Nishikawa T."/>
            <person name="Otsuki T."/>
            <person name="Sugiyama T."/>
            <person name="Irie R."/>
            <person name="Wakamatsu A."/>
            <person name="Hayashi K."/>
            <person name="Sato H."/>
            <person name="Nagai K."/>
            <person name="Kimura K."/>
            <person name="Makita H."/>
            <person name="Sekine M."/>
            <person name="Obayashi M."/>
            <person name="Nishi T."/>
            <person name="Shibahara T."/>
            <person name="Tanaka T."/>
            <person name="Ishii S."/>
            <person name="Yamamoto J."/>
            <person name="Saito K."/>
            <person name="Kawai Y."/>
            <person name="Isono Y."/>
            <person name="Nakamura Y."/>
            <person name="Nagahari K."/>
            <person name="Murakami K."/>
            <person name="Yasuda T."/>
            <person name="Iwayanagi T."/>
            <person name="Wagatsuma M."/>
            <person name="Shiratori A."/>
            <person name="Sudo H."/>
            <person name="Hosoiri T."/>
            <person name="Kaku Y."/>
            <person name="Kodaira H."/>
            <person name="Kondo H."/>
            <person name="Sugawara M."/>
            <person name="Takahashi M."/>
            <person name="Kanda K."/>
            <person name="Yokoi T."/>
            <person name="Furuya T."/>
            <person name="Kikkawa E."/>
            <person name="Omura Y."/>
            <person name="Abe K."/>
            <person name="Kamihara K."/>
            <person name="Katsuta N."/>
            <person name="Sato K."/>
            <person name="Tanikawa M."/>
            <person name="Yamazaki M."/>
            <person name="Ninomiya K."/>
            <person name="Ishibashi T."/>
            <person name="Yamashita H."/>
            <person name="Murakawa K."/>
            <person name="Fujimori K."/>
            <person name="Tanai H."/>
            <person name="Kimata M."/>
            <person name="Watanabe M."/>
            <person name="Hiraoka S."/>
            <person name="Chiba Y."/>
            <person name="Ishida S."/>
            <person name="Ono Y."/>
            <person name="Takiguchi S."/>
            <person name="Watanabe S."/>
            <person name="Yosida M."/>
            <person name="Hotuta T."/>
            <person name="Kusano J."/>
            <person name="Kanehori K."/>
            <person name="Takahashi-Fujii A."/>
            <person name="Hara H."/>
            <person name="Tanase T.-O."/>
            <person name="Nomura Y."/>
            <person name="Togiya S."/>
            <person name="Komai F."/>
            <person name="Hara R."/>
            <person name="Takeuchi K."/>
            <person name="Arita M."/>
            <person name="Imose N."/>
            <person name="Musashino K."/>
            <person name="Yuuki H."/>
            <person name="Oshima A."/>
            <person name="Sasaki N."/>
            <person name="Aotsuka S."/>
            <person name="Yoshikawa Y."/>
            <person name="Matsunawa H."/>
            <person name="Ichihara T."/>
            <person name="Shiohata N."/>
            <person name="Sano S."/>
            <person name="Moriya S."/>
            <person name="Momiyama H."/>
            <person name="Satoh N."/>
            <person name="Takami S."/>
            <person name="Terashima Y."/>
            <person name="Suzuki O."/>
            <person name="Nakagawa S."/>
            <person name="Senoh A."/>
            <person name="Mizoguchi H."/>
            <person name="Goto Y."/>
            <person name="Shimizu F."/>
            <person name="Wakebe H."/>
            <person name="Hishigaki H."/>
            <person name="Watanabe T."/>
            <person name="Sugiyama A."/>
            <person name="Takemoto M."/>
            <person name="Kawakami B."/>
            <person name="Yamazaki M."/>
            <person name="Watanabe K."/>
            <person name="Kumagai A."/>
            <person name="Itakura S."/>
            <person name="Fukuzumi Y."/>
            <person name="Fujimori Y."/>
            <person name="Komiyama M."/>
            <person name="Tashiro H."/>
            <person name="Tanigami A."/>
            <person name="Fujiwara T."/>
            <person name="Ono T."/>
            <person name="Yamada K."/>
            <person name="Fujii Y."/>
            <person name="Ozaki K."/>
            <person name="Hirao M."/>
            <person name="Ohmori Y."/>
            <person name="Kawabata A."/>
            <person name="Hikiji T."/>
            <person name="Kobatake N."/>
            <person name="Inagaki H."/>
            <person name="Ikema Y."/>
            <person name="Okamoto S."/>
            <person name="Okitani R."/>
            <person name="Kawakami T."/>
            <person name="Noguchi S."/>
            <person name="Itoh T."/>
            <person name="Shigeta K."/>
            <person name="Senba T."/>
            <person name="Matsumura K."/>
            <person name="Nakajima Y."/>
            <person name="Mizuno T."/>
            <person name="Morinaga M."/>
            <person name="Sasaki M."/>
            <person name="Togashi T."/>
            <person name="Oyama M."/>
            <person name="Hata H."/>
            <person name="Watanabe M."/>
            <person name="Komatsu T."/>
            <person name="Mizushima-Sugano J."/>
            <person name="Satoh T."/>
            <person name="Shirai Y."/>
            <person name="Takahashi Y."/>
            <person name="Nakagawa K."/>
            <person name="Okumura K."/>
            <person name="Nagase T."/>
            <person name="Nomura N."/>
            <person name="Kikuchi H."/>
            <person name="Masuho Y."/>
            <person name="Yamashita R."/>
            <person name="Nakai K."/>
            <person name="Yada T."/>
            <person name="Nakamura Y."/>
            <person name="Ohara O."/>
            <person name="Isogai T."/>
            <person name="Sugano S."/>
        </authorList>
    </citation>
    <scope>NUCLEOTIDE SEQUENCE [LARGE SCALE MRNA] OF 149-473</scope>
</reference>
<protein>
    <recommendedName>
        <fullName evidence="1">Dol-P-Glc:Glc(2)Man(9)GlcNAc(2)-PP-Dol alpha-1,2-glucosyltransferase</fullName>
        <ecNumber evidence="1">2.4.1.256</ecNumber>
    </recommendedName>
    <alternativeName>
        <fullName>Alpha-1,2-glucosyltransferase ALG10-A</fullName>
    </alternativeName>
    <alternativeName>
        <fullName>Alpha-2-glucosyltransferase ALG10-A</fullName>
    </alternativeName>
    <alternativeName>
        <fullName evidence="4">Asparagine-linked glycosylation protein 10 homolog A</fullName>
    </alternativeName>
</protein>
<keyword id="KW-0256">Endoplasmic reticulum</keyword>
<keyword id="KW-0328">Glycosyltransferase</keyword>
<keyword id="KW-0472">Membrane</keyword>
<keyword id="KW-1267">Proteomics identification</keyword>
<keyword id="KW-1185">Reference proteome</keyword>
<keyword id="KW-0808">Transferase</keyword>
<keyword id="KW-0812">Transmembrane</keyword>
<keyword id="KW-1133">Transmembrane helix</keyword>
<name>AG10A_HUMAN</name>
<gene>
    <name evidence="4" type="primary">ALG10</name>
    <name evidence="4" type="synonym">ALG10A</name>
</gene>
<feature type="chain" id="PRO_0000215447" description="Dol-P-Glc:Glc(2)Man(9)GlcNAc(2)-PP-Dol alpha-1,2-glucosyltransferase">
    <location>
        <begin position="1"/>
        <end position="473"/>
    </location>
</feature>
<feature type="topological domain" description="Cytoplasmic" evidence="2">
    <location>
        <begin position="1"/>
        <end position="6"/>
    </location>
</feature>
<feature type="transmembrane region" description="Helical" evidence="2">
    <location>
        <begin position="7"/>
        <end position="27"/>
    </location>
</feature>
<feature type="topological domain" description="Extracellular" evidence="2">
    <location>
        <begin position="28"/>
        <end position="64"/>
    </location>
</feature>
<feature type="transmembrane region" description="Helical" evidence="2">
    <location>
        <begin position="65"/>
        <end position="85"/>
    </location>
</feature>
<feature type="topological domain" description="Cytoplasmic" evidence="2">
    <location>
        <begin position="86"/>
        <end position="97"/>
    </location>
</feature>
<feature type="transmembrane region" description="Helical" evidence="2">
    <location>
        <begin position="98"/>
        <end position="118"/>
    </location>
</feature>
<feature type="topological domain" description="Extracellular" evidence="2">
    <location>
        <begin position="119"/>
        <end position="130"/>
    </location>
</feature>
<feature type="transmembrane region" description="Helical" evidence="2">
    <location>
        <begin position="131"/>
        <end position="151"/>
    </location>
</feature>
<feature type="transmembrane region" description="Helical" evidence="2">
    <location>
        <begin position="152"/>
        <end position="172"/>
    </location>
</feature>
<feature type="topological domain" description="Extracellular" evidence="2">
    <location>
        <begin position="173"/>
        <end position="175"/>
    </location>
</feature>
<feature type="transmembrane region" description="Helical" evidence="2">
    <location>
        <begin position="176"/>
        <end position="196"/>
    </location>
</feature>
<feature type="topological domain" description="Cytoplasmic" evidence="2">
    <location>
        <begin position="197"/>
        <end position="249"/>
    </location>
</feature>
<feature type="transmembrane region" description="Helical" evidence="2">
    <location>
        <begin position="250"/>
        <end position="270"/>
    </location>
</feature>
<feature type="topological domain" description="Extracellular" evidence="2">
    <location>
        <begin position="271"/>
        <end position="283"/>
    </location>
</feature>
<feature type="transmembrane region" description="Helical" evidence="2">
    <location>
        <begin position="284"/>
        <end position="304"/>
    </location>
</feature>
<feature type="topological domain" description="Cytoplasmic" evidence="2">
    <location>
        <begin position="305"/>
        <end position="323"/>
    </location>
</feature>
<feature type="transmembrane region" description="Helical" evidence="2">
    <location>
        <begin position="324"/>
        <end position="344"/>
    </location>
</feature>
<feature type="topological domain" description="Extracellular" evidence="2">
    <location>
        <begin position="345"/>
        <end position="367"/>
    </location>
</feature>
<feature type="transmembrane region" description="Helical" evidence="2">
    <location>
        <begin position="368"/>
        <end position="388"/>
    </location>
</feature>
<feature type="topological domain" description="Cytoplasmic" evidence="2">
    <location>
        <begin position="389"/>
        <end position="392"/>
    </location>
</feature>
<feature type="transmembrane region" description="Helical" evidence="2">
    <location>
        <begin position="393"/>
        <end position="413"/>
    </location>
</feature>
<feature type="topological domain" description="Extracellular" evidence="2">
    <location>
        <begin position="414"/>
        <end position="436"/>
    </location>
</feature>
<feature type="transmembrane region" description="Helical" evidence="2">
    <location>
        <begin position="437"/>
        <end position="457"/>
    </location>
</feature>
<feature type="topological domain" description="Cytoplasmic" evidence="2">
    <location>
        <begin position="458"/>
        <end position="473"/>
    </location>
</feature>
<feature type="sequence conflict" description="In Ref. 2; AAH70347." evidence="3" ref="2">
    <original>M</original>
    <variation>V</variation>
    <location>
        <position position="184"/>
    </location>
</feature>
<feature type="sequence conflict" description="In Ref. 1; CAC41349." evidence="3" ref="1">
    <original>I</original>
    <variation>T</variation>
    <location>
        <position position="258"/>
    </location>
</feature>
<feature type="sequence conflict" description="In Ref. 3; BAB55272." evidence="3" ref="3">
    <original>I</original>
    <variation>T</variation>
    <location>
        <position position="384"/>
    </location>
</feature>
<comment type="function">
    <text evidence="1">Dol-P-Glc:Glc(2)Man(9)GlcNAc(2)-PP-Dol alpha-1,2-glucosyltransferase that operates in the biosynthetic pathway of dolichol-linked oligosaccharides, the glycan precursors employed in protein asparagine (N)-glycosylation. The assembly of dolichol-linked oligosaccharides begins on the cytosolic side of the endoplasmic reticulum membrane and finishes in its lumen. The sequential addition of sugars to dolichol pyrophosphate produces dolichol-linked oligosaccharides containing fourteen sugars, including two GlcNAcs, nine mannoses and three glucoses. Once assembled, the oligosaccharide is transferred from the lipid to nascent proteins by oligosaccharyltransferases. In the lumen of the endoplasmic reticulum, adds the third and last glucose residue from dolichyl phosphate glucose (Dol-P-Glc) onto the lipid-linked oligosaccharide intermediate Glc(2)Man(9)GlcNAc(2)-PP-Dol to produce Glc(3)Man(9)GlcNAc(2)-PP-Dol.</text>
</comment>
<comment type="catalytic activity">
    <reaction evidence="1">
        <text>an alpha-D-Glc-(1-&gt;3)-alpha-D-Glc-(1-&gt;3)-alpha-D-Man-(1-&gt;2)-alpha-D-Man-(1-&gt;2)-alpha-D-Man-(1-&gt;3)-[alpha-D-Man-(1-&gt;2)-alpha-D-Man-(1-&gt;3)-[alpha-D-Man-(1-&gt;2)-alpha-D-Man-(1-&gt;6)]-alpha-D-Man-(1-&gt;6)]-beta-D-Man-(1-&gt;4)-beta-D-GlcNAc-(1-&gt;4)-alpha-D-GlcNAc-diphospho-di-trans,poly-cis-dolichol + a di-trans,poly-cis-dolichyl beta-D-glucosyl phosphate = a alpha-D-Glc-(1-&gt;2)-alpha-D-Glc-(1-&gt;3)-alpha-D-Glc-(1-&gt;3)-alpha-D-Man-(1-&gt;2)-alpha-D-Man-(1-&gt;2)-alpha-D-Man-(1-&gt;3)-[alpha-D-Man-(1-&gt;2)-alpha-D-Man-(1-&gt;3)-[alpha-D-Man-(1-&gt;2)-alpha-D-Man-(1-&gt;6)]-alpha-D-Man-(1-&gt;6)]-beta-D-Man-(1-&gt;4)-beta-D-GlcNAc-(1-&gt;4)-alpha-D-GlcNAc-diphospho-di-trans,poly-cis-dolichol + a di-trans,poly-cis-dolichyl phosphate + H(+)</text>
        <dbReference type="Rhea" id="RHEA:29543"/>
        <dbReference type="Rhea" id="RHEA-COMP:19498"/>
        <dbReference type="Rhea" id="RHEA-COMP:19502"/>
        <dbReference type="Rhea" id="RHEA-COMP:19512"/>
        <dbReference type="Rhea" id="RHEA-COMP:19522"/>
        <dbReference type="ChEBI" id="CHEBI:15378"/>
        <dbReference type="ChEBI" id="CHEBI:57525"/>
        <dbReference type="ChEBI" id="CHEBI:57683"/>
        <dbReference type="ChEBI" id="CHEBI:132522"/>
        <dbReference type="ChEBI" id="CHEBI:132523"/>
        <dbReference type="EC" id="2.4.1.256"/>
    </reaction>
    <physiologicalReaction direction="left-to-right" evidence="1">
        <dbReference type="Rhea" id="RHEA:29544"/>
    </physiologicalReaction>
</comment>
<comment type="pathway">
    <text evidence="1">Protein modification; protein glycosylation.</text>
</comment>
<comment type="interaction">
    <interactant intactId="EBI-13064220">
        <id>Q5BKT4</id>
    </interactant>
    <interactant intactId="EBI-7797864">
        <id>P11912</id>
        <label>CD79A</label>
    </interactant>
    <organismsDiffer>false</organismsDiffer>
    <experiments>3</experiments>
</comment>
<comment type="interaction">
    <interactant intactId="EBI-13064220">
        <id>Q5BKT4</id>
    </interactant>
    <interactant intactId="EBI-781551">
        <id>Q9Y282</id>
        <label>ERGIC3</label>
    </interactant>
    <organismsDiffer>false</organismsDiffer>
    <experiments>3</experiments>
</comment>
<comment type="interaction">
    <interactant intactId="EBI-13064220">
        <id>Q5BKT4</id>
    </interactant>
    <interactant intactId="EBI-11956479">
        <id>P23142-4</id>
        <label>FBLN1</label>
    </interactant>
    <organismsDiffer>false</organismsDiffer>
    <experiments>3</experiments>
</comment>
<comment type="interaction">
    <interactant intactId="EBI-13064220">
        <id>Q5BKT4</id>
    </interactant>
    <interactant intactId="EBI-2868124">
        <id>Q9BSE4</id>
        <label>HERPUD2</label>
    </interactant>
    <organismsDiffer>false</organismsDiffer>
    <experiments>3</experiments>
</comment>
<comment type="interaction">
    <interactant intactId="EBI-13064220">
        <id>Q5BKT4</id>
    </interactant>
    <interactant intactId="EBI-749270">
        <id>Q8N6R1</id>
        <label>SERP2</label>
    </interactant>
    <organismsDiffer>false</organismsDiffer>
    <experiments>3</experiments>
</comment>
<comment type="interaction">
    <interactant intactId="EBI-13064220">
        <id>Q5BKT4</id>
    </interactant>
    <interactant intactId="EBI-18037857">
        <id>Q3SXP7</id>
        <label>SHISAL1</label>
    </interactant>
    <organismsDiffer>false</organismsDiffer>
    <experiments>3</experiments>
</comment>
<comment type="subcellular location">
    <subcellularLocation>
        <location evidence="1">Endoplasmic reticulum membrane</location>
        <topology evidence="2">Multi-pass membrane protein</topology>
    </subcellularLocation>
</comment>
<comment type="similarity">
    <text evidence="3">Belongs to the ALG10 glucosyltransferase family.</text>
</comment>
<comment type="sequence caution" evidence="3">
    <conflict type="erroneous initiation">
        <sequence resource="EMBL-CDS" id="BAB55272"/>
    </conflict>
</comment>
<dbReference type="EC" id="2.4.1.256" evidence="1"/>
<dbReference type="EMBL" id="AJ312278">
    <property type="protein sequence ID" value="CAC41349.1"/>
    <property type="molecule type" value="mRNA"/>
</dbReference>
<dbReference type="EMBL" id="BC070347">
    <property type="protein sequence ID" value="AAH70347.1"/>
    <property type="molecule type" value="mRNA"/>
</dbReference>
<dbReference type="EMBL" id="BC090948">
    <property type="protein sequence ID" value="AAH90948.1"/>
    <property type="molecule type" value="mRNA"/>
</dbReference>
<dbReference type="EMBL" id="AK027657">
    <property type="protein sequence ID" value="BAB55272.1"/>
    <property type="status" value="ALT_INIT"/>
    <property type="molecule type" value="mRNA"/>
</dbReference>
<dbReference type="CCDS" id="CCDS41769.1"/>
<dbReference type="RefSeq" id="NP_116223.3">
    <property type="nucleotide sequence ID" value="NM_032834.3"/>
</dbReference>
<dbReference type="BioGRID" id="124356">
    <property type="interactions" value="48"/>
</dbReference>
<dbReference type="FunCoup" id="Q5BKT4">
    <property type="interactions" value="2741"/>
</dbReference>
<dbReference type="IntAct" id="Q5BKT4">
    <property type="interactions" value="35"/>
</dbReference>
<dbReference type="STRING" id="9606.ENSP00000266483"/>
<dbReference type="CAZy" id="GT59">
    <property type="family name" value="Glycosyltransferase Family 59"/>
</dbReference>
<dbReference type="GlyGen" id="Q5BKT4">
    <property type="glycosylation" value="1 site, 1 O-linked glycan (1 site)"/>
</dbReference>
<dbReference type="iPTMnet" id="Q5BKT4"/>
<dbReference type="PhosphoSitePlus" id="Q5BKT4"/>
<dbReference type="SwissPalm" id="Q5BKT4"/>
<dbReference type="BioMuta" id="ALG10"/>
<dbReference type="DMDM" id="74736030"/>
<dbReference type="jPOST" id="Q5BKT4"/>
<dbReference type="MassIVE" id="Q5BKT4"/>
<dbReference type="PaxDb" id="9606-ENSP00000266483"/>
<dbReference type="PeptideAtlas" id="Q5BKT4"/>
<dbReference type="ProteomicsDB" id="62698"/>
<dbReference type="Pumba" id="Q5BKT4"/>
<dbReference type="Antibodypedia" id="55444">
    <property type="antibodies" value="84 antibodies from 17 providers"/>
</dbReference>
<dbReference type="DNASU" id="84920"/>
<dbReference type="Ensembl" id="ENST00000266483.7">
    <property type="protein sequence ID" value="ENSP00000266483.2"/>
    <property type="gene ID" value="ENSG00000139133.7"/>
</dbReference>
<dbReference type="GeneID" id="84920"/>
<dbReference type="KEGG" id="hsa:84920"/>
<dbReference type="MANE-Select" id="ENST00000266483.7">
    <property type="protein sequence ID" value="ENSP00000266483.2"/>
    <property type="RefSeq nucleotide sequence ID" value="NM_032834.4"/>
    <property type="RefSeq protein sequence ID" value="NP_116223.3"/>
</dbReference>
<dbReference type="UCSC" id="uc001rlm.4">
    <property type="organism name" value="human"/>
</dbReference>
<dbReference type="AGR" id="HGNC:23162"/>
<dbReference type="CTD" id="84920"/>
<dbReference type="DisGeNET" id="84920"/>
<dbReference type="GeneCards" id="ALG10"/>
<dbReference type="HGNC" id="HGNC:23162">
    <property type="gene designation" value="ALG10"/>
</dbReference>
<dbReference type="HPA" id="ENSG00000139133">
    <property type="expression patterns" value="Low tissue specificity"/>
</dbReference>
<dbReference type="MalaCards" id="ALG10"/>
<dbReference type="MIM" id="618355">
    <property type="type" value="gene"/>
</dbReference>
<dbReference type="neXtProt" id="NX_Q5BKT4"/>
<dbReference type="OpenTargets" id="ENSG00000139133"/>
<dbReference type="PharmGKB" id="PA134732019"/>
<dbReference type="VEuPathDB" id="HostDB:ENSG00000139133"/>
<dbReference type="eggNOG" id="KOG2642">
    <property type="taxonomic scope" value="Eukaryota"/>
</dbReference>
<dbReference type="GeneTree" id="ENSGT00390000012906"/>
<dbReference type="HOGENOM" id="CLU_017053_1_0_1"/>
<dbReference type="InParanoid" id="Q5BKT4"/>
<dbReference type="OMA" id="VWDSKIT"/>
<dbReference type="OrthoDB" id="4769at2759"/>
<dbReference type="PAN-GO" id="Q5BKT4">
    <property type="GO annotations" value="3 GO annotations based on evolutionary models"/>
</dbReference>
<dbReference type="PhylomeDB" id="Q5BKT4"/>
<dbReference type="TreeFam" id="TF300150"/>
<dbReference type="BRENDA" id="2.4.1.256">
    <property type="organism ID" value="2681"/>
</dbReference>
<dbReference type="PathwayCommons" id="Q5BKT4"/>
<dbReference type="Reactome" id="R-HSA-446193">
    <property type="pathway name" value="Biosynthesis of the N-glycan precursor (dolichol lipid-linked oligosaccharide, LLO) and transfer to a nascent protein"/>
</dbReference>
<dbReference type="SignaLink" id="Q5BKT4"/>
<dbReference type="UniPathway" id="UPA00378"/>
<dbReference type="BioGRID-ORCS" id="84920">
    <property type="hits" value="54 hits in 1059 CRISPR screens"/>
</dbReference>
<dbReference type="ChiTaRS" id="ALG10">
    <property type="organism name" value="human"/>
</dbReference>
<dbReference type="GenomeRNAi" id="84920"/>
<dbReference type="Pharos" id="Q5BKT4">
    <property type="development level" value="Tbio"/>
</dbReference>
<dbReference type="PRO" id="PR:Q5BKT4"/>
<dbReference type="Proteomes" id="UP000005640">
    <property type="component" value="Chromosome 12"/>
</dbReference>
<dbReference type="RNAct" id="Q5BKT4">
    <property type="molecule type" value="protein"/>
</dbReference>
<dbReference type="Bgee" id="ENSG00000139133">
    <property type="expression patterns" value="Expressed in primordial germ cell in gonad and 109 other cell types or tissues"/>
</dbReference>
<dbReference type="ExpressionAtlas" id="Q5BKT4">
    <property type="expression patterns" value="baseline and differential"/>
</dbReference>
<dbReference type="GO" id="GO:0005783">
    <property type="term" value="C:endoplasmic reticulum"/>
    <property type="evidence" value="ECO:0000318"/>
    <property type="project" value="GO_Central"/>
</dbReference>
<dbReference type="GO" id="GO:0005789">
    <property type="term" value="C:endoplasmic reticulum membrane"/>
    <property type="evidence" value="ECO:0007669"/>
    <property type="project" value="UniProtKB-SubCell"/>
</dbReference>
<dbReference type="GO" id="GO:0106073">
    <property type="term" value="F:dolichyl pyrophosphate Glc2Man9GlcNAc2 alpha-1,2-glucosyltransferase activity"/>
    <property type="evidence" value="ECO:0000318"/>
    <property type="project" value="GO_Central"/>
</dbReference>
<dbReference type="GO" id="GO:0006488">
    <property type="term" value="P:dolichol-linked oligosaccharide biosynthetic process"/>
    <property type="evidence" value="ECO:0007669"/>
    <property type="project" value="InterPro"/>
</dbReference>
<dbReference type="GO" id="GO:0006487">
    <property type="term" value="P:protein N-linked glycosylation"/>
    <property type="evidence" value="ECO:0000318"/>
    <property type="project" value="GO_Central"/>
</dbReference>
<dbReference type="InterPro" id="IPR016900">
    <property type="entry name" value="Alg10"/>
</dbReference>
<dbReference type="PANTHER" id="PTHR12989">
    <property type="entry name" value="ALPHA-1,2-GLUCOSYLTRANSFERASE ALG10"/>
    <property type="match status" value="1"/>
</dbReference>
<dbReference type="PANTHER" id="PTHR12989:SF11">
    <property type="entry name" value="DOL-P-GLC:GLC(2)MAN(9)GLCNAC(2)-PP-DOL ALPHA-1,2-GLUCOSYLTRANSFERASE"/>
    <property type="match status" value="1"/>
</dbReference>
<dbReference type="Pfam" id="PF04922">
    <property type="entry name" value="DIE2_ALG10"/>
    <property type="match status" value="1"/>
</dbReference>
<dbReference type="PIRSF" id="PIRSF028810">
    <property type="entry name" value="Alpha1_2_glucosyltferase_Alg10"/>
    <property type="match status" value="1"/>
</dbReference>
<accession>Q5BKT4</accession>
<accession>Q6NS98</accession>
<accession>Q96DU0</accession>
<accession>Q96SM6</accession>